<organism>
    <name type="scientific">Rhizobium meliloti (strain 1021)</name>
    <name type="common">Ensifer meliloti</name>
    <name type="synonym">Sinorhizobium meliloti</name>
    <dbReference type="NCBI Taxonomy" id="266834"/>
    <lineage>
        <taxon>Bacteria</taxon>
        <taxon>Pseudomonadati</taxon>
        <taxon>Pseudomonadota</taxon>
        <taxon>Alphaproteobacteria</taxon>
        <taxon>Hyphomicrobiales</taxon>
        <taxon>Rhizobiaceae</taxon>
        <taxon>Sinorhizobium/Ensifer group</taxon>
        <taxon>Sinorhizobium</taxon>
    </lineage>
</organism>
<comment type="function">
    <text evidence="1">Catalyzes the condensation of (S)-aspartate-beta-semialdehyde [(S)-ASA] and pyruvate to 4-hydroxy-tetrahydrodipicolinate (HTPA).</text>
</comment>
<comment type="catalytic activity">
    <reaction evidence="1">
        <text>L-aspartate 4-semialdehyde + pyruvate = (2S,4S)-4-hydroxy-2,3,4,5-tetrahydrodipicolinate + H2O + H(+)</text>
        <dbReference type="Rhea" id="RHEA:34171"/>
        <dbReference type="ChEBI" id="CHEBI:15361"/>
        <dbReference type="ChEBI" id="CHEBI:15377"/>
        <dbReference type="ChEBI" id="CHEBI:15378"/>
        <dbReference type="ChEBI" id="CHEBI:67139"/>
        <dbReference type="ChEBI" id="CHEBI:537519"/>
        <dbReference type="EC" id="4.3.3.7"/>
    </reaction>
</comment>
<comment type="pathway">
    <text evidence="1">Amino-acid biosynthesis; L-lysine biosynthesis via DAP pathway; (S)-tetrahydrodipicolinate from L-aspartate: step 3/4.</text>
</comment>
<comment type="subunit">
    <text evidence="1">Homotetramer; dimer of dimers.</text>
</comment>
<comment type="subcellular location">
    <subcellularLocation>
        <location evidence="1">Cytoplasm</location>
    </subcellularLocation>
</comment>
<comment type="similarity">
    <text evidence="1">Belongs to the DapA family.</text>
</comment>
<comment type="caution">
    <text evidence="2">Was originally thought to be a dihydrodipicolinate synthase (DHDPS), catalyzing the condensation of (S)-aspartate-beta-semialdehyde [(S)-ASA] and pyruvate to dihydrodipicolinate (DHDP). However, it was shown in E.coli that the product of the enzymatic reaction is not dihydrodipicolinate but in fact (4S)-4-hydroxy-2,3,4,5-tetrahydro-(2S)-dipicolinic acid (HTPA), and that the consecutive dehydration reaction leading to DHDP is not spontaneous but catalyzed by DapB.</text>
</comment>
<dbReference type="EC" id="4.3.3.7" evidence="1"/>
<dbReference type="EMBL" id="AL591688">
    <property type="protein sequence ID" value="CAC45638.1"/>
    <property type="molecule type" value="Genomic_DNA"/>
</dbReference>
<dbReference type="RefSeq" id="NP_385165.1">
    <property type="nucleotide sequence ID" value="NC_003047.1"/>
</dbReference>
<dbReference type="RefSeq" id="WP_003527298.1">
    <property type="nucleotide sequence ID" value="NC_003047.1"/>
</dbReference>
<dbReference type="SMR" id="Q92R55"/>
<dbReference type="EnsemblBacteria" id="CAC45638">
    <property type="protein sequence ID" value="CAC45638"/>
    <property type="gene ID" value="SMc02404"/>
</dbReference>
<dbReference type="GeneID" id="89575384"/>
<dbReference type="KEGG" id="sme:SMc02404"/>
<dbReference type="PATRIC" id="fig|266834.11.peg.2466"/>
<dbReference type="eggNOG" id="COG0329">
    <property type="taxonomic scope" value="Bacteria"/>
</dbReference>
<dbReference type="HOGENOM" id="CLU_049343_7_1_5"/>
<dbReference type="OrthoDB" id="9782828at2"/>
<dbReference type="UniPathway" id="UPA00034">
    <property type="reaction ID" value="UER00017"/>
</dbReference>
<dbReference type="Proteomes" id="UP000001976">
    <property type="component" value="Chromosome"/>
</dbReference>
<dbReference type="GO" id="GO:0005829">
    <property type="term" value="C:cytosol"/>
    <property type="evidence" value="ECO:0007669"/>
    <property type="project" value="TreeGrafter"/>
</dbReference>
<dbReference type="GO" id="GO:0008840">
    <property type="term" value="F:4-hydroxy-tetrahydrodipicolinate synthase activity"/>
    <property type="evidence" value="ECO:0007669"/>
    <property type="project" value="UniProtKB-UniRule"/>
</dbReference>
<dbReference type="GO" id="GO:0019877">
    <property type="term" value="P:diaminopimelate biosynthetic process"/>
    <property type="evidence" value="ECO:0007669"/>
    <property type="project" value="UniProtKB-UniRule"/>
</dbReference>
<dbReference type="GO" id="GO:0009089">
    <property type="term" value="P:lysine biosynthetic process via diaminopimelate"/>
    <property type="evidence" value="ECO:0007669"/>
    <property type="project" value="UniProtKB-UniRule"/>
</dbReference>
<dbReference type="CDD" id="cd00950">
    <property type="entry name" value="DHDPS"/>
    <property type="match status" value="1"/>
</dbReference>
<dbReference type="Gene3D" id="3.20.20.70">
    <property type="entry name" value="Aldolase class I"/>
    <property type="match status" value="1"/>
</dbReference>
<dbReference type="HAMAP" id="MF_00418">
    <property type="entry name" value="DapA"/>
    <property type="match status" value="1"/>
</dbReference>
<dbReference type="InterPro" id="IPR013785">
    <property type="entry name" value="Aldolase_TIM"/>
</dbReference>
<dbReference type="InterPro" id="IPR005263">
    <property type="entry name" value="DapA"/>
</dbReference>
<dbReference type="InterPro" id="IPR002220">
    <property type="entry name" value="DapA-like"/>
</dbReference>
<dbReference type="InterPro" id="IPR020625">
    <property type="entry name" value="Schiff_base-form_aldolases_AS"/>
</dbReference>
<dbReference type="InterPro" id="IPR020624">
    <property type="entry name" value="Schiff_base-form_aldolases_CS"/>
</dbReference>
<dbReference type="NCBIfam" id="TIGR00674">
    <property type="entry name" value="dapA"/>
    <property type="match status" value="1"/>
</dbReference>
<dbReference type="PANTHER" id="PTHR12128:SF66">
    <property type="entry name" value="4-HYDROXY-2-OXOGLUTARATE ALDOLASE, MITOCHONDRIAL"/>
    <property type="match status" value="1"/>
</dbReference>
<dbReference type="PANTHER" id="PTHR12128">
    <property type="entry name" value="DIHYDRODIPICOLINATE SYNTHASE"/>
    <property type="match status" value="1"/>
</dbReference>
<dbReference type="Pfam" id="PF00701">
    <property type="entry name" value="DHDPS"/>
    <property type="match status" value="1"/>
</dbReference>
<dbReference type="PIRSF" id="PIRSF001365">
    <property type="entry name" value="DHDPS"/>
    <property type="match status" value="1"/>
</dbReference>
<dbReference type="PRINTS" id="PR00146">
    <property type="entry name" value="DHPICSNTHASE"/>
</dbReference>
<dbReference type="SMART" id="SM01130">
    <property type="entry name" value="DHDPS"/>
    <property type="match status" value="1"/>
</dbReference>
<dbReference type="SUPFAM" id="SSF51569">
    <property type="entry name" value="Aldolase"/>
    <property type="match status" value="1"/>
</dbReference>
<dbReference type="PROSITE" id="PS00665">
    <property type="entry name" value="DHDPS_1"/>
    <property type="match status" value="1"/>
</dbReference>
<dbReference type="PROSITE" id="PS00666">
    <property type="entry name" value="DHDPS_2"/>
    <property type="match status" value="1"/>
</dbReference>
<protein>
    <recommendedName>
        <fullName evidence="1">4-hydroxy-tetrahydrodipicolinate synthase</fullName>
        <shortName evidence="1">HTPA synthase</shortName>
        <ecNumber evidence="1">4.3.3.7</ecNumber>
    </recommendedName>
</protein>
<evidence type="ECO:0000255" key="1">
    <source>
        <dbReference type="HAMAP-Rule" id="MF_00418"/>
    </source>
</evidence>
<evidence type="ECO:0000305" key="2"/>
<name>DAPA_RHIME</name>
<gene>
    <name evidence="1" type="primary">dapA</name>
    <name type="ordered locus">R01059</name>
    <name type="ORF">SMc02404</name>
</gene>
<proteinExistence type="inferred from homology"/>
<sequence length="294" mass="30835">MFKGSIPALVTPFTAAGSVDADSFVAHVEWQIKEGSHGLVPVGTTGESPTLSHDEHKKVVELCVEASARRVPVIAGAGSNNTIEAIELAQHAEKAGADAILVVTPYYNKPTQKGLFAHFAAIAESVKLPIVIYNIPGRSVVDMSVETMAALAKAHPTIVGVKDATGRIERVSEQRMACGKAFVQLSGEDATALGFNAHGGVGCISVTANVAPRLCAEFQEATLAGNYAKALELQDKLMPLHKAIFLEPGVCGAKYALNRLGRMSFTVRSPLLSALEPATASAIDAALRHAGLMN</sequence>
<reference key="1">
    <citation type="journal article" date="2001" name="Proc. Natl. Acad. Sci. U.S.A.">
        <title>Analysis of the chromosome sequence of the legume symbiont Sinorhizobium meliloti strain 1021.</title>
        <authorList>
            <person name="Capela D."/>
            <person name="Barloy-Hubler F."/>
            <person name="Gouzy J."/>
            <person name="Bothe G."/>
            <person name="Ampe F."/>
            <person name="Batut J."/>
            <person name="Boistard P."/>
            <person name="Becker A."/>
            <person name="Boutry M."/>
            <person name="Cadieu E."/>
            <person name="Dreano S."/>
            <person name="Gloux S."/>
            <person name="Godrie T."/>
            <person name="Goffeau A."/>
            <person name="Kahn D."/>
            <person name="Kiss E."/>
            <person name="Lelaure V."/>
            <person name="Masuy D."/>
            <person name="Pohl T."/>
            <person name="Portetelle D."/>
            <person name="Puehler A."/>
            <person name="Purnelle B."/>
            <person name="Ramsperger U."/>
            <person name="Renard C."/>
            <person name="Thebault P."/>
            <person name="Vandenbol M."/>
            <person name="Weidner S."/>
            <person name="Galibert F."/>
        </authorList>
    </citation>
    <scope>NUCLEOTIDE SEQUENCE [LARGE SCALE GENOMIC DNA]</scope>
    <source>
        <strain>1021</strain>
    </source>
</reference>
<reference key="2">
    <citation type="journal article" date="2001" name="Science">
        <title>The composite genome of the legume symbiont Sinorhizobium meliloti.</title>
        <authorList>
            <person name="Galibert F."/>
            <person name="Finan T.M."/>
            <person name="Long S.R."/>
            <person name="Puehler A."/>
            <person name="Abola P."/>
            <person name="Ampe F."/>
            <person name="Barloy-Hubler F."/>
            <person name="Barnett M.J."/>
            <person name="Becker A."/>
            <person name="Boistard P."/>
            <person name="Bothe G."/>
            <person name="Boutry M."/>
            <person name="Bowser L."/>
            <person name="Buhrmester J."/>
            <person name="Cadieu E."/>
            <person name="Capela D."/>
            <person name="Chain P."/>
            <person name="Cowie A."/>
            <person name="Davis R.W."/>
            <person name="Dreano S."/>
            <person name="Federspiel N.A."/>
            <person name="Fisher R.F."/>
            <person name="Gloux S."/>
            <person name="Godrie T."/>
            <person name="Goffeau A."/>
            <person name="Golding B."/>
            <person name="Gouzy J."/>
            <person name="Gurjal M."/>
            <person name="Hernandez-Lucas I."/>
            <person name="Hong A."/>
            <person name="Huizar L."/>
            <person name="Hyman R.W."/>
            <person name="Jones T."/>
            <person name="Kahn D."/>
            <person name="Kahn M.L."/>
            <person name="Kalman S."/>
            <person name="Keating D.H."/>
            <person name="Kiss E."/>
            <person name="Komp C."/>
            <person name="Lelaure V."/>
            <person name="Masuy D."/>
            <person name="Palm C."/>
            <person name="Peck M.C."/>
            <person name="Pohl T.M."/>
            <person name="Portetelle D."/>
            <person name="Purnelle B."/>
            <person name="Ramsperger U."/>
            <person name="Surzycki R."/>
            <person name="Thebault P."/>
            <person name="Vandenbol M."/>
            <person name="Vorhoelter F.J."/>
            <person name="Weidner S."/>
            <person name="Wells D.H."/>
            <person name="Wong K."/>
            <person name="Yeh K.-C."/>
            <person name="Batut J."/>
        </authorList>
    </citation>
    <scope>NUCLEOTIDE SEQUENCE [LARGE SCALE GENOMIC DNA]</scope>
    <source>
        <strain>1021</strain>
    </source>
</reference>
<accession>Q92R55</accession>
<keyword id="KW-0028">Amino-acid biosynthesis</keyword>
<keyword id="KW-0963">Cytoplasm</keyword>
<keyword id="KW-0220">Diaminopimelate biosynthesis</keyword>
<keyword id="KW-0456">Lyase</keyword>
<keyword id="KW-0457">Lysine biosynthesis</keyword>
<keyword id="KW-1185">Reference proteome</keyword>
<keyword id="KW-0704">Schiff base</keyword>
<feature type="chain" id="PRO_0000103141" description="4-hydroxy-tetrahydrodipicolinate synthase">
    <location>
        <begin position="1"/>
        <end position="294"/>
    </location>
</feature>
<feature type="active site" description="Proton donor/acceptor" evidence="1">
    <location>
        <position position="133"/>
    </location>
</feature>
<feature type="active site" description="Schiff-base intermediate with substrate" evidence="1">
    <location>
        <position position="162"/>
    </location>
</feature>
<feature type="binding site" evidence="1">
    <location>
        <position position="45"/>
    </location>
    <ligand>
        <name>pyruvate</name>
        <dbReference type="ChEBI" id="CHEBI:15361"/>
    </ligand>
</feature>
<feature type="binding site" evidence="1">
    <location>
        <position position="204"/>
    </location>
    <ligand>
        <name>pyruvate</name>
        <dbReference type="ChEBI" id="CHEBI:15361"/>
    </ligand>
</feature>
<feature type="site" description="Part of a proton relay during catalysis" evidence="1">
    <location>
        <position position="44"/>
    </location>
</feature>
<feature type="site" description="Part of a proton relay during catalysis" evidence="1">
    <location>
        <position position="107"/>
    </location>
</feature>